<accession>A7FWU5</accession>
<keyword id="KW-0028">Amino-acid biosynthesis</keyword>
<keyword id="KW-0055">Arginine biosynthesis</keyword>
<keyword id="KW-0963">Cytoplasm</keyword>
<keyword id="KW-0456">Lyase</keyword>
<dbReference type="EC" id="4.3.2.1" evidence="1"/>
<dbReference type="EMBL" id="CP000726">
    <property type="protein sequence ID" value="ABS32461.1"/>
    <property type="molecule type" value="Genomic_DNA"/>
</dbReference>
<dbReference type="RefSeq" id="WP_011986965.1">
    <property type="nucleotide sequence ID" value="NC_009697.1"/>
</dbReference>
<dbReference type="SMR" id="A7FWU5"/>
<dbReference type="GeneID" id="5186924"/>
<dbReference type="KEGG" id="cba:CLB_2611"/>
<dbReference type="HOGENOM" id="CLU_027272_2_3_9"/>
<dbReference type="UniPathway" id="UPA00068">
    <property type="reaction ID" value="UER00114"/>
</dbReference>
<dbReference type="GO" id="GO:0005829">
    <property type="term" value="C:cytosol"/>
    <property type="evidence" value="ECO:0007669"/>
    <property type="project" value="TreeGrafter"/>
</dbReference>
<dbReference type="GO" id="GO:0004056">
    <property type="term" value="F:argininosuccinate lyase activity"/>
    <property type="evidence" value="ECO:0007669"/>
    <property type="project" value="UniProtKB-UniRule"/>
</dbReference>
<dbReference type="GO" id="GO:0042450">
    <property type="term" value="P:arginine biosynthetic process via ornithine"/>
    <property type="evidence" value="ECO:0007669"/>
    <property type="project" value="InterPro"/>
</dbReference>
<dbReference type="GO" id="GO:0006526">
    <property type="term" value="P:L-arginine biosynthetic process"/>
    <property type="evidence" value="ECO:0007669"/>
    <property type="project" value="UniProtKB-UniRule"/>
</dbReference>
<dbReference type="CDD" id="cd01359">
    <property type="entry name" value="Argininosuccinate_lyase"/>
    <property type="match status" value="1"/>
</dbReference>
<dbReference type="FunFam" id="1.10.275.10:FF:000002">
    <property type="entry name" value="Argininosuccinate lyase"/>
    <property type="match status" value="1"/>
</dbReference>
<dbReference type="FunFam" id="1.10.40.30:FF:000001">
    <property type="entry name" value="Argininosuccinate lyase"/>
    <property type="match status" value="1"/>
</dbReference>
<dbReference type="FunFam" id="1.20.200.10:FF:000002">
    <property type="entry name" value="Argininosuccinate lyase"/>
    <property type="match status" value="1"/>
</dbReference>
<dbReference type="Gene3D" id="1.10.40.30">
    <property type="entry name" value="Fumarase/aspartase (C-terminal domain)"/>
    <property type="match status" value="1"/>
</dbReference>
<dbReference type="Gene3D" id="1.20.200.10">
    <property type="entry name" value="Fumarase/aspartase (Central domain)"/>
    <property type="match status" value="1"/>
</dbReference>
<dbReference type="Gene3D" id="1.10.275.10">
    <property type="entry name" value="Fumarase/aspartase (N-terminal domain)"/>
    <property type="match status" value="1"/>
</dbReference>
<dbReference type="HAMAP" id="MF_00006">
    <property type="entry name" value="Arg_succ_lyase"/>
    <property type="match status" value="1"/>
</dbReference>
<dbReference type="InterPro" id="IPR029419">
    <property type="entry name" value="Arg_succ_lyase_C"/>
</dbReference>
<dbReference type="InterPro" id="IPR009049">
    <property type="entry name" value="Argininosuccinate_lyase"/>
</dbReference>
<dbReference type="InterPro" id="IPR024083">
    <property type="entry name" value="Fumarase/histidase_N"/>
</dbReference>
<dbReference type="InterPro" id="IPR020557">
    <property type="entry name" value="Fumarate_lyase_CS"/>
</dbReference>
<dbReference type="InterPro" id="IPR000362">
    <property type="entry name" value="Fumarate_lyase_fam"/>
</dbReference>
<dbReference type="InterPro" id="IPR022761">
    <property type="entry name" value="Fumarate_lyase_N"/>
</dbReference>
<dbReference type="InterPro" id="IPR008948">
    <property type="entry name" value="L-Aspartase-like"/>
</dbReference>
<dbReference type="NCBIfam" id="TIGR00838">
    <property type="entry name" value="argH"/>
    <property type="match status" value="1"/>
</dbReference>
<dbReference type="PANTHER" id="PTHR43814">
    <property type="entry name" value="ARGININOSUCCINATE LYASE"/>
    <property type="match status" value="1"/>
</dbReference>
<dbReference type="PANTHER" id="PTHR43814:SF1">
    <property type="entry name" value="ARGININOSUCCINATE LYASE"/>
    <property type="match status" value="1"/>
</dbReference>
<dbReference type="Pfam" id="PF14698">
    <property type="entry name" value="ASL_C2"/>
    <property type="match status" value="1"/>
</dbReference>
<dbReference type="Pfam" id="PF00206">
    <property type="entry name" value="Lyase_1"/>
    <property type="match status" value="1"/>
</dbReference>
<dbReference type="PRINTS" id="PR00145">
    <property type="entry name" value="ARGSUCLYASE"/>
</dbReference>
<dbReference type="PRINTS" id="PR00149">
    <property type="entry name" value="FUMRATELYASE"/>
</dbReference>
<dbReference type="SUPFAM" id="SSF48557">
    <property type="entry name" value="L-aspartase-like"/>
    <property type="match status" value="1"/>
</dbReference>
<dbReference type="PROSITE" id="PS00163">
    <property type="entry name" value="FUMARATE_LYASES"/>
    <property type="match status" value="1"/>
</dbReference>
<reference key="1">
    <citation type="journal article" date="2007" name="PLoS ONE">
        <title>Analysis of the neurotoxin complex genes in Clostridium botulinum A1-A4 and B1 strains: BoNT/A3, /Ba4 and /B1 clusters are located within plasmids.</title>
        <authorList>
            <person name="Smith T.J."/>
            <person name="Hill K.K."/>
            <person name="Foley B.T."/>
            <person name="Detter J.C."/>
            <person name="Munk A.C."/>
            <person name="Bruce D.C."/>
            <person name="Doggett N.A."/>
            <person name="Smith L.A."/>
            <person name="Marks J.D."/>
            <person name="Xie G."/>
            <person name="Brettin T.S."/>
        </authorList>
    </citation>
    <scope>NUCLEOTIDE SEQUENCE [LARGE SCALE GENOMIC DNA]</scope>
    <source>
        <strain>ATCC 19397 / Type A</strain>
    </source>
</reference>
<evidence type="ECO:0000255" key="1">
    <source>
        <dbReference type="HAMAP-Rule" id="MF_00006"/>
    </source>
</evidence>
<organism>
    <name type="scientific">Clostridium botulinum (strain ATCC 19397 / Type A)</name>
    <dbReference type="NCBI Taxonomy" id="441770"/>
    <lineage>
        <taxon>Bacteria</taxon>
        <taxon>Bacillati</taxon>
        <taxon>Bacillota</taxon>
        <taxon>Clostridia</taxon>
        <taxon>Eubacteriales</taxon>
        <taxon>Clostridiaceae</taxon>
        <taxon>Clostridium</taxon>
    </lineage>
</organism>
<name>ARLY_CLOB1</name>
<feature type="chain" id="PRO_1000000467" description="Argininosuccinate lyase">
    <location>
        <begin position="1"/>
        <end position="440"/>
    </location>
</feature>
<comment type="catalytic activity">
    <reaction evidence="1">
        <text>2-(N(omega)-L-arginino)succinate = fumarate + L-arginine</text>
        <dbReference type="Rhea" id="RHEA:24020"/>
        <dbReference type="ChEBI" id="CHEBI:29806"/>
        <dbReference type="ChEBI" id="CHEBI:32682"/>
        <dbReference type="ChEBI" id="CHEBI:57472"/>
        <dbReference type="EC" id="4.3.2.1"/>
    </reaction>
</comment>
<comment type="pathway">
    <text evidence="1">Amino-acid biosynthesis; L-arginine biosynthesis; L-arginine from L-ornithine and carbamoyl phosphate: step 3/3.</text>
</comment>
<comment type="subcellular location">
    <subcellularLocation>
        <location evidence="1">Cytoplasm</location>
    </subcellularLocation>
</comment>
<comment type="similarity">
    <text evidence="1">Belongs to the lyase 1 family. Argininosuccinate lyase subfamily.</text>
</comment>
<proteinExistence type="inferred from homology"/>
<sequence>MKLWGGRFKEEESKLMEDFNSSLSFDKKLYYEDIKGSIAHVKMLTNQNIIKEEEKEKILLGLEEILKEIDEGILKIEGDYEDIHSFVEINLINKIGNVGKKLHTGRSRNDQVALDMKLYAKKSTEEVIECLKELMDSLIKVGNENNYIMPGYTHLQRAQVVTFRYHLLAYFEMFKRDEKRLENALEILNESPLGSGALAGSTYNIDKEYTAKLLGFRKPVDNFLDGVSDRDYIIELISKFSIIMMHLSRLSEELILWSSSEFRFIQIGDAYSTGSSIMPQKKNPDGAELIRGKIGRVYGDLISILTVMKSLPLAYNKDMQEDKEPFFDAKDTVISCLKVMEGIISTLKVNKENLMKSVKKGFLNATEAADYLVNKGMAFRDAHKVIGEVVIYCEDKNSAIEDLSLEELKQFSDLFCEDIYEFIDYKNSINKGIKKEMGYF</sequence>
<gene>
    <name evidence="1" type="primary">argH</name>
    <name type="ordered locus">CLB_2611</name>
</gene>
<protein>
    <recommendedName>
        <fullName evidence="1">Argininosuccinate lyase</fullName>
        <shortName evidence="1">ASAL</shortName>
        <ecNumber evidence="1">4.3.2.1</ecNumber>
    </recommendedName>
    <alternativeName>
        <fullName evidence="1">Arginosuccinase</fullName>
    </alternativeName>
</protein>